<evidence type="ECO:0000255" key="1">
    <source>
        <dbReference type="HAMAP-Rule" id="MF_01380"/>
    </source>
</evidence>
<sequence>METKQALEKADIIFSDNAAKKVSTLIEEEKNENLHLRVYITGGGCSGFSYGFNFDETYKEGDSSVENNGVQLVVDPMSYQYLIGATVDYLEDLQGARFIIHNPNAKTTCGCGSSFSV</sequence>
<reference key="1">
    <citation type="journal article" date="2007" name="Science">
        <title>The Calyptogena magnifica chemoautotrophic symbiont genome.</title>
        <authorList>
            <person name="Newton I.L.G."/>
            <person name="Woyke T."/>
            <person name="Auchtung T.A."/>
            <person name="Dilly G.F."/>
            <person name="Dutton R.J."/>
            <person name="Fisher M.C."/>
            <person name="Fontanez K.M."/>
            <person name="Lau E."/>
            <person name="Stewart F.J."/>
            <person name="Richardson P.M."/>
            <person name="Barry K.W."/>
            <person name="Saunders E."/>
            <person name="Detter J.C."/>
            <person name="Wu D."/>
            <person name="Eisen J.A."/>
            <person name="Cavanaugh C.M."/>
        </authorList>
    </citation>
    <scope>NUCLEOTIDE SEQUENCE [LARGE SCALE GENOMIC DNA]</scope>
</reference>
<organism>
    <name type="scientific">Ruthia magnifica subsp. Calyptogena magnifica</name>
    <dbReference type="NCBI Taxonomy" id="413404"/>
    <lineage>
        <taxon>Bacteria</taxon>
        <taxon>Pseudomonadati</taxon>
        <taxon>Pseudomonadota</taxon>
        <taxon>Gammaproteobacteria</taxon>
        <taxon>Candidatus Pseudothioglobaceae</taxon>
        <taxon>Candidatus Ruthturnera</taxon>
    </lineage>
</organism>
<dbReference type="EMBL" id="CP000488">
    <property type="protein sequence ID" value="ABL02766.1"/>
    <property type="molecule type" value="Genomic_DNA"/>
</dbReference>
<dbReference type="RefSeq" id="WP_011738391.1">
    <property type="nucleotide sequence ID" value="NC_008610.1"/>
</dbReference>
<dbReference type="SMR" id="A1AXV9"/>
<dbReference type="STRING" id="413404.Rmag_1062"/>
<dbReference type="KEGG" id="rma:Rmag_1062"/>
<dbReference type="eggNOG" id="COG0316">
    <property type="taxonomic scope" value="Bacteria"/>
</dbReference>
<dbReference type="HOGENOM" id="CLU_069054_5_3_6"/>
<dbReference type="OrthoDB" id="9801228at2"/>
<dbReference type="Proteomes" id="UP000002587">
    <property type="component" value="Chromosome"/>
</dbReference>
<dbReference type="GO" id="GO:0051537">
    <property type="term" value="F:2 iron, 2 sulfur cluster binding"/>
    <property type="evidence" value="ECO:0007669"/>
    <property type="project" value="TreeGrafter"/>
</dbReference>
<dbReference type="GO" id="GO:0051539">
    <property type="term" value="F:4 iron, 4 sulfur cluster binding"/>
    <property type="evidence" value="ECO:0007669"/>
    <property type="project" value="TreeGrafter"/>
</dbReference>
<dbReference type="GO" id="GO:0005506">
    <property type="term" value="F:iron ion binding"/>
    <property type="evidence" value="ECO:0007669"/>
    <property type="project" value="UniProtKB-UniRule"/>
</dbReference>
<dbReference type="GO" id="GO:0016226">
    <property type="term" value="P:iron-sulfur cluster assembly"/>
    <property type="evidence" value="ECO:0007669"/>
    <property type="project" value="UniProtKB-UniRule"/>
</dbReference>
<dbReference type="FunFam" id="2.60.300.12:FF:000002">
    <property type="entry name" value="Iron-sulfur cluster insertion protein ErpA"/>
    <property type="match status" value="1"/>
</dbReference>
<dbReference type="Gene3D" id="2.60.300.12">
    <property type="entry name" value="HesB-like domain"/>
    <property type="match status" value="1"/>
</dbReference>
<dbReference type="HAMAP" id="MF_01380">
    <property type="entry name" value="Fe_S_insert_ErpA"/>
    <property type="match status" value="1"/>
</dbReference>
<dbReference type="InterPro" id="IPR000361">
    <property type="entry name" value="FeS_biogenesis"/>
</dbReference>
<dbReference type="InterPro" id="IPR016092">
    <property type="entry name" value="FeS_cluster_insertion"/>
</dbReference>
<dbReference type="InterPro" id="IPR017870">
    <property type="entry name" value="FeS_cluster_insertion_CS"/>
</dbReference>
<dbReference type="InterPro" id="IPR023063">
    <property type="entry name" value="FeS_cluster_insertion_RrpA"/>
</dbReference>
<dbReference type="InterPro" id="IPR035903">
    <property type="entry name" value="HesB-like_dom_sf"/>
</dbReference>
<dbReference type="NCBIfam" id="TIGR00049">
    <property type="entry name" value="iron-sulfur cluster assembly accessory protein"/>
    <property type="match status" value="1"/>
</dbReference>
<dbReference type="NCBIfam" id="NF010147">
    <property type="entry name" value="PRK13623.1"/>
    <property type="match status" value="1"/>
</dbReference>
<dbReference type="PANTHER" id="PTHR43011">
    <property type="entry name" value="IRON-SULFUR CLUSTER ASSEMBLY 2 HOMOLOG, MITOCHONDRIAL"/>
    <property type="match status" value="1"/>
</dbReference>
<dbReference type="PANTHER" id="PTHR43011:SF1">
    <property type="entry name" value="IRON-SULFUR CLUSTER ASSEMBLY 2 HOMOLOG, MITOCHONDRIAL"/>
    <property type="match status" value="1"/>
</dbReference>
<dbReference type="Pfam" id="PF01521">
    <property type="entry name" value="Fe-S_biosyn"/>
    <property type="match status" value="1"/>
</dbReference>
<dbReference type="SUPFAM" id="SSF89360">
    <property type="entry name" value="HesB-like domain"/>
    <property type="match status" value="1"/>
</dbReference>
<dbReference type="PROSITE" id="PS01152">
    <property type="entry name" value="HESB"/>
    <property type="match status" value="1"/>
</dbReference>
<proteinExistence type="inferred from homology"/>
<gene>
    <name evidence="1" type="primary">erpA</name>
    <name type="ordered locus">Rmag_1062</name>
</gene>
<protein>
    <recommendedName>
        <fullName evidence="1">Iron-sulfur cluster insertion protein ErpA</fullName>
    </recommendedName>
</protein>
<accession>A1AXV9</accession>
<name>ERPA_RUTMC</name>
<keyword id="KW-0408">Iron</keyword>
<keyword id="KW-0411">Iron-sulfur</keyword>
<keyword id="KW-0479">Metal-binding</keyword>
<comment type="function">
    <text evidence="1">Required for insertion of 4Fe-4S clusters for at least IspG.</text>
</comment>
<comment type="cofactor">
    <cofactor evidence="1">
        <name>iron-sulfur cluster</name>
        <dbReference type="ChEBI" id="CHEBI:30408"/>
    </cofactor>
    <text evidence="1">Binds 1 iron-sulfur cluster per subunit.</text>
</comment>
<comment type="subunit">
    <text evidence="1">Homodimer.</text>
</comment>
<comment type="similarity">
    <text evidence="1">Belongs to the HesB/IscA family.</text>
</comment>
<feature type="chain" id="PRO_0000311541" description="Iron-sulfur cluster insertion protein ErpA">
    <location>
        <begin position="1"/>
        <end position="117"/>
    </location>
</feature>
<feature type="binding site" evidence="1">
    <location>
        <position position="45"/>
    </location>
    <ligand>
        <name>iron-sulfur cluster</name>
        <dbReference type="ChEBI" id="CHEBI:30408"/>
    </ligand>
</feature>
<feature type="binding site" evidence="1">
    <location>
        <position position="109"/>
    </location>
    <ligand>
        <name>iron-sulfur cluster</name>
        <dbReference type="ChEBI" id="CHEBI:30408"/>
    </ligand>
</feature>
<feature type="binding site" evidence="1">
    <location>
        <position position="111"/>
    </location>
    <ligand>
        <name>iron-sulfur cluster</name>
        <dbReference type="ChEBI" id="CHEBI:30408"/>
    </ligand>
</feature>